<name>FBX39_BOVIN</name>
<organism>
    <name type="scientific">Bos taurus</name>
    <name type="common">Bovine</name>
    <dbReference type="NCBI Taxonomy" id="9913"/>
    <lineage>
        <taxon>Eukaryota</taxon>
        <taxon>Metazoa</taxon>
        <taxon>Chordata</taxon>
        <taxon>Craniata</taxon>
        <taxon>Vertebrata</taxon>
        <taxon>Euteleostomi</taxon>
        <taxon>Mammalia</taxon>
        <taxon>Eutheria</taxon>
        <taxon>Laurasiatheria</taxon>
        <taxon>Artiodactyla</taxon>
        <taxon>Ruminantia</taxon>
        <taxon>Pecora</taxon>
        <taxon>Bovidae</taxon>
        <taxon>Bovinae</taxon>
        <taxon>Bos</taxon>
    </lineage>
</organism>
<protein>
    <recommendedName>
        <fullName>F-box only protein 39</fullName>
    </recommendedName>
</protein>
<gene>
    <name type="primary">FBXO39</name>
</gene>
<sequence length="443" mass="52771">MDEEDQLIQPQDQSCWATLPDVCLRRVFWWLGDRDRSRAALVCRKWNQMMYSADLWRYRTITFSGRPSRVHASEFESALWYVKKFGRYLEHLEIKFLNPYNAVLTKKFQVTMRGLLSCLGKSNNRLKSLSIQHLELDRLVWRNSIRSSFMKSLSFFLKKMGKHLNYLSLKGARLTTEQGCHILNALSYLRNESTVTELNIEDCFSHHLAVYSSPQFNKTMATFRNLVSLTLNYNCISDELLENLCDNNTGTLRTMNIKCHIHDPHGQVIWGMSWAKLARHATSLKVNFFFERVMKYERLARILLQEIPIRSISLRSCYFSDPDWSMRPTLTDLLPTFRHTLQKLTFEFNNNHESLDEELHLLILSCRKLFYFKIWAFLDVKFVERILKSREEGQCALRTLKVRIYTNRYETNEEDRTLREIYRKYRKLIDSELNYFVIAYPMM</sequence>
<keyword id="KW-1185">Reference proteome</keyword>
<keyword id="KW-0833">Ubl conjugation pathway</keyword>
<reference key="1">
    <citation type="submission" date="2005-11" db="EMBL/GenBank/DDBJ databases">
        <authorList>
            <consortium name="NIH - Mammalian Gene Collection (MGC) project"/>
        </authorList>
    </citation>
    <scope>NUCLEOTIDE SEQUENCE [LARGE SCALE MRNA]</scope>
    <source>
        <strain>Crossbred X Angus</strain>
        <tissue>Liver</tissue>
    </source>
</reference>
<dbReference type="EMBL" id="BC109511">
    <property type="protein sequence ID" value="AAI09512.1"/>
    <property type="molecule type" value="mRNA"/>
</dbReference>
<dbReference type="RefSeq" id="NP_001032702.1">
    <property type="nucleotide sequence ID" value="NM_001037613.2"/>
</dbReference>
<dbReference type="RefSeq" id="XP_024836098.1">
    <property type="nucleotide sequence ID" value="XM_024980330.2"/>
</dbReference>
<dbReference type="SMR" id="Q32LM4"/>
<dbReference type="FunCoup" id="Q32LM4">
    <property type="interactions" value="11"/>
</dbReference>
<dbReference type="STRING" id="9913.ENSBTAP00000024410"/>
<dbReference type="PaxDb" id="9913-ENSBTAP00000024410"/>
<dbReference type="Ensembl" id="ENSBTAT00000024410.5">
    <property type="protein sequence ID" value="ENSBTAP00000024410.4"/>
    <property type="gene ID" value="ENSBTAG00000018345.5"/>
</dbReference>
<dbReference type="GeneID" id="539103"/>
<dbReference type="KEGG" id="bta:539103"/>
<dbReference type="CTD" id="162517"/>
<dbReference type="VEuPathDB" id="HostDB:ENSBTAG00000018345"/>
<dbReference type="VGNC" id="VGNC:28909">
    <property type="gene designation" value="FBXO39"/>
</dbReference>
<dbReference type="eggNOG" id="KOG1947">
    <property type="taxonomic scope" value="Eukaryota"/>
</dbReference>
<dbReference type="GeneTree" id="ENSGT00510000048837"/>
<dbReference type="HOGENOM" id="CLU_050223_0_0_1"/>
<dbReference type="InParanoid" id="Q32LM4"/>
<dbReference type="OMA" id="MATFHNL"/>
<dbReference type="OrthoDB" id="61560at2759"/>
<dbReference type="TreeFam" id="TF321665"/>
<dbReference type="Proteomes" id="UP000009136">
    <property type="component" value="Chromosome 19"/>
</dbReference>
<dbReference type="Bgee" id="ENSBTAG00000018345">
    <property type="expression patterns" value="Expressed in semen and 10 other cell types or tissues"/>
</dbReference>
<dbReference type="GO" id="GO:0019005">
    <property type="term" value="C:SCF ubiquitin ligase complex"/>
    <property type="evidence" value="ECO:0000318"/>
    <property type="project" value="GO_Central"/>
</dbReference>
<dbReference type="GO" id="GO:0031146">
    <property type="term" value="P:SCF-dependent proteasomal ubiquitin-dependent protein catabolic process"/>
    <property type="evidence" value="ECO:0000318"/>
    <property type="project" value="GO_Central"/>
</dbReference>
<dbReference type="CDD" id="cd22108">
    <property type="entry name" value="F-box_FBXO39"/>
    <property type="match status" value="1"/>
</dbReference>
<dbReference type="FunFam" id="1.20.1280.50:FF:000027">
    <property type="entry name" value="F-box only protein 39"/>
    <property type="match status" value="1"/>
</dbReference>
<dbReference type="FunFam" id="3.80.10.10:FF:000237">
    <property type="entry name" value="F-box only protein 39"/>
    <property type="match status" value="1"/>
</dbReference>
<dbReference type="Gene3D" id="1.20.1280.50">
    <property type="match status" value="1"/>
</dbReference>
<dbReference type="Gene3D" id="3.80.10.10">
    <property type="entry name" value="Ribonuclease Inhibitor"/>
    <property type="match status" value="1"/>
</dbReference>
<dbReference type="InterPro" id="IPR036047">
    <property type="entry name" value="F-box-like_dom_sf"/>
</dbReference>
<dbReference type="InterPro" id="IPR001810">
    <property type="entry name" value="F-box_dom"/>
</dbReference>
<dbReference type="InterPro" id="IPR045048">
    <property type="entry name" value="FBXO31/39"/>
</dbReference>
<dbReference type="InterPro" id="IPR032675">
    <property type="entry name" value="LRR_dom_sf"/>
</dbReference>
<dbReference type="PANTHER" id="PTHR10706">
    <property type="entry name" value="F-BOX FAMILY PROTEIN"/>
    <property type="match status" value="1"/>
</dbReference>
<dbReference type="PANTHER" id="PTHR10706:SF160">
    <property type="entry name" value="F-BOX ONLY PROTEIN 39"/>
    <property type="match status" value="1"/>
</dbReference>
<dbReference type="Pfam" id="PF12937">
    <property type="entry name" value="F-box-like"/>
    <property type="match status" value="1"/>
</dbReference>
<dbReference type="SUPFAM" id="SSF81383">
    <property type="entry name" value="F-box domain"/>
    <property type="match status" value="1"/>
</dbReference>
<dbReference type="SUPFAM" id="SSF52047">
    <property type="entry name" value="RNI-like"/>
    <property type="match status" value="1"/>
</dbReference>
<dbReference type="PROSITE" id="PS50181">
    <property type="entry name" value="FBOX"/>
    <property type="match status" value="1"/>
</dbReference>
<feature type="chain" id="PRO_0000226719" description="F-box only protein 39">
    <location>
        <begin position="1"/>
        <end position="443"/>
    </location>
</feature>
<feature type="domain" description="F-box" evidence="2">
    <location>
        <begin position="16"/>
        <end position="61"/>
    </location>
</feature>
<comment type="function">
    <text evidence="1">Substrate-recognition component of the SCF (SKP1-CUL1-F-box protein)-type E3 ubiquitin ligase complex.</text>
</comment>
<comment type="subunit">
    <text evidence="1">Directly interacts with SKP1 and CUL1.</text>
</comment>
<evidence type="ECO:0000250" key="1"/>
<evidence type="ECO:0000255" key="2">
    <source>
        <dbReference type="PROSITE-ProRule" id="PRU00080"/>
    </source>
</evidence>
<proteinExistence type="evidence at transcript level"/>
<accession>Q32LM4</accession>